<accession>Q9CZV2</accession>
<feature type="chain" id="PRO_0000439347" description="Shieldin complex subunit 3">
    <location>
        <begin position="1"/>
        <end position="255"/>
    </location>
</feature>
<feature type="region of interest" description="Sufficient for interaction with MAD2L2" evidence="1">
    <location>
        <begin position="33"/>
        <end position="88"/>
    </location>
</feature>
<feature type="region of interest" description="Disordered" evidence="2">
    <location>
        <begin position="116"/>
        <end position="135"/>
    </location>
</feature>
<feature type="sequence conflict" description="In Ref. 1; BAB28057." evidence="3" ref="1">
    <original>P</original>
    <variation>A</variation>
    <location>
        <position position="58"/>
    </location>
</feature>
<feature type="sequence conflict" description="In Ref. 1; BAB28057." evidence="3" ref="1">
    <original>Y</original>
    <variation>F</variation>
    <location>
        <position position="76"/>
    </location>
</feature>
<feature type="sequence conflict" description="In Ref. 1; BAB28057." evidence="3" ref="1">
    <original>F</original>
    <variation>C</variation>
    <location>
        <position position="98"/>
    </location>
</feature>
<feature type="sequence conflict" description="In Ref. 1; BAB28057." evidence="3" ref="1">
    <original>KNSG</original>
    <variation>IISE</variation>
    <location>
        <begin position="124"/>
        <end position="127"/>
    </location>
</feature>
<feature type="sequence conflict" description="In Ref. 1; BAB28057." evidence="3" ref="1">
    <original>K</original>
    <variation>R</variation>
    <location>
        <position position="133"/>
    </location>
</feature>
<feature type="sequence conflict" description="In Ref. 1; BAB28057." evidence="3" ref="1">
    <original>L</original>
    <variation>V</variation>
    <location>
        <position position="153"/>
    </location>
</feature>
<feature type="sequence conflict" description="In Ref. 1; BAB28057." evidence="3" ref="1">
    <original>L</original>
    <variation>I</variation>
    <location>
        <position position="161"/>
    </location>
</feature>
<reference key="1">
    <citation type="journal article" date="2005" name="Science">
        <title>The transcriptional landscape of the mammalian genome.</title>
        <authorList>
            <person name="Carninci P."/>
            <person name="Kasukawa T."/>
            <person name="Katayama S."/>
            <person name="Gough J."/>
            <person name="Frith M.C."/>
            <person name="Maeda N."/>
            <person name="Oyama R."/>
            <person name="Ravasi T."/>
            <person name="Lenhard B."/>
            <person name="Wells C."/>
            <person name="Kodzius R."/>
            <person name="Shimokawa K."/>
            <person name="Bajic V.B."/>
            <person name="Brenner S.E."/>
            <person name="Batalov S."/>
            <person name="Forrest A.R."/>
            <person name="Zavolan M."/>
            <person name="Davis M.J."/>
            <person name="Wilming L.G."/>
            <person name="Aidinis V."/>
            <person name="Allen J.E."/>
            <person name="Ambesi-Impiombato A."/>
            <person name="Apweiler R."/>
            <person name="Aturaliya R.N."/>
            <person name="Bailey T.L."/>
            <person name="Bansal M."/>
            <person name="Baxter L."/>
            <person name="Beisel K.W."/>
            <person name="Bersano T."/>
            <person name="Bono H."/>
            <person name="Chalk A.M."/>
            <person name="Chiu K.P."/>
            <person name="Choudhary V."/>
            <person name="Christoffels A."/>
            <person name="Clutterbuck D.R."/>
            <person name="Crowe M.L."/>
            <person name="Dalla E."/>
            <person name="Dalrymple B.P."/>
            <person name="de Bono B."/>
            <person name="Della Gatta G."/>
            <person name="di Bernardo D."/>
            <person name="Down T."/>
            <person name="Engstrom P."/>
            <person name="Fagiolini M."/>
            <person name="Faulkner G."/>
            <person name="Fletcher C.F."/>
            <person name="Fukushima T."/>
            <person name="Furuno M."/>
            <person name="Futaki S."/>
            <person name="Gariboldi M."/>
            <person name="Georgii-Hemming P."/>
            <person name="Gingeras T.R."/>
            <person name="Gojobori T."/>
            <person name="Green R.E."/>
            <person name="Gustincich S."/>
            <person name="Harbers M."/>
            <person name="Hayashi Y."/>
            <person name="Hensch T.K."/>
            <person name="Hirokawa N."/>
            <person name="Hill D."/>
            <person name="Huminiecki L."/>
            <person name="Iacono M."/>
            <person name="Ikeo K."/>
            <person name="Iwama A."/>
            <person name="Ishikawa T."/>
            <person name="Jakt M."/>
            <person name="Kanapin A."/>
            <person name="Katoh M."/>
            <person name="Kawasawa Y."/>
            <person name="Kelso J."/>
            <person name="Kitamura H."/>
            <person name="Kitano H."/>
            <person name="Kollias G."/>
            <person name="Krishnan S.P."/>
            <person name="Kruger A."/>
            <person name="Kummerfeld S.K."/>
            <person name="Kurochkin I.V."/>
            <person name="Lareau L.F."/>
            <person name="Lazarevic D."/>
            <person name="Lipovich L."/>
            <person name="Liu J."/>
            <person name="Liuni S."/>
            <person name="McWilliam S."/>
            <person name="Madan Babu M."/>
            <person name="Madera M."/>
            <person name="Marchionni L."/>
            <person name="Matsuda H."/>
            <person name="Matsuzawa S."/>
            <person name="Miki H."/>
            <person name="Mignone F."/>
            <person name="Miyake S."/>
            <person name="Morris K."/>
            <person name="Mottagui-Tabar S."/>
            <person name="Mulder N."/>
            <person name="Nakano N."/>
            <person name="Nakauchi H."/>
            <person name="Ng P."/>
            <person name="Nilsson R."/>
            <person name="Nishiguchi S."/>
            <person name="Nishikawa S."/>
            <person name="Nori F."/>
            <person name="Ohara O."/>
            <person name="Okazaki Y."/>
            <person name="Orlando V."/>
            <person name="Pang K.C."/>
            <person name="Pavan W.J."/>
            <person name="Pavesi G."/>
            <person name="Pesole G."/>
            <person name="Petrovsky N."/>
            <person name="Piazza S."/>
            <person name="Reed J."/>
            <person name="Reid J.F."/>
            <person name="Ring B.Z."/>
            <person name="Ringwald M."/>
            <person name="Rost B."/>
            <person name="Ruan Y."/>
            <person name="Salzberg S.L."/>
            <person name="Sandelin A."/>
            <person name="Schneider C."/>
            <person name="Schoenbach C."/>
            <person name="Sekiguchi K."/>
            <person name="Semple C.A."/>
            <person name="Seno S."/>
            <person name="Sessa L."/>
            <person name="Sheng Y."/>
            <person name="Shibata Y."/>
            <person name="Shimada H."/>
            <person name="Shimada K."/>
            <person name="Silva D."/>
            <person name="Sinclair B."/>
            <person name="Sperling S."/>
            <person name="Stupka E."/>
            <person name="Sugiura K."/>
            <person name="Sultana R."/>
            <person name="Takenaka Y."/>
            <person name="Taki K."/>
            <person name="Tammoja K."/>
            <person name="Tan S.L."/>
            <person name="Tang S."/>
            <person name="Taylor M.S."/>
            <person name="Tegner J."/>
            <person name="Teichmann S.A."/>
            <person name="Ueda H.R."/>
            <person name="van Nimwegen E."/>
            <person name="Verardo R."/>
            <person name="Wei C.L."/>
            <person name="Yagi K."/>
            <person name="Yamanishi H."/>
            <person name="Zabarovsky E."/>
            <person name="Zhu S."/>
            <person name="Zimmer A."/>
            <person name="Hide W."/>
            <person name="Bult C."/>
            <person name="Grimmond S.M."/>
            <person name="Teasdale R.D."/>
            <person name="Liu E.T."/>
            <person name="Brusic V."/>
            <person name="Quackenbush J."/>
            <person name="Wahlestedt C."/>
            <person name="Mattick J.S."/>
            <person name="Hume D.A."/>
            <person name="Kai C."/>
            <person name="Sasaki D."/>
            <person name="Tomaru Y."/>
            <person name="Fukuda S."/>
            <person name="Kanamori-Katayama M."/>
            <person name="Suzuki M."/>
            <person name="Aoki J."/>
            <person name="Arakawa T."/>
            <person name="Iida J."/>
            <person name="Imamura K."/>
            <person name="Itoh M."/>
            <person name="Kato T."/>
            <person name="Kawaji H."/>
            <person name="Kawagashira N."/>
            <person name="Kawashima T."/>
            <person name="Kojima M."/>
            <person name="Kondo S."/>
            <person name="Konno H."/>
            <person name="Nakano K."/>
            <person name="Ninomiya N."/>
            <person name="Nishio T."/>
            <person name="Okada M."/>
            <person name="Plessy C."/>
            <person name="Shibata K."/>
            <person name="Shiraki T."/>
            <person name="Suzuki S."/>
            <person name="Tagami M."/>
            <person name="Waki K."/>
            <person name="Watahiki A."/>
            <person name="Okamura-Oho Y."/>
            <person name="Suzuki H."/>
            <person name="Kawai J."/>
            <person name="Hayashizaki Y."/>
        </authorList>
    </citation>
    <scope>NUCLEOTIDE SEQUENCE [LARGE SCALE MRNA]</scope>
    <source>
        <strain>C57BL/6J</strain>
        <tissue>Embryo</tissue>
    </source>
</reference>
<reference key="2">
    <citation type="journal article" date="2009" name="PLoS Biol.">
        <title>Lineage-specific biology revealed by a finished genome assembly of the mouse.</title>
        <authorList>
            <person name="Church D.M."/>
            <person name="Goodstadt L."/>
            <person name="Hillier L.W."/>
            <person name="Zody M.C."/>
            <person name="Goldstein S."/>
            <person name="She X."/>
            <person name="Bult C.J."/>
            <person name="Agarwala R."/>
            <person name="Cherry J.L."/>
            <person name="DiCuccio M."/>
            <person name="Hlavina W."/>
            <person name="Kapustin Y."/>
            <person name="Meric P."/>
            <person name="Maglott D."/>
            <person name="Birtle Z."/>
            <person name="Marques A.C."/>
            <person name="Graves T."/>
            <person name="Zhou S."/>
            <person name="Teague B."/>
            <person name="Potamousis K."/>
            <person name="Churas C."/>
            <person name="Place M."/>
            <person name="Herschleb J."/>
            <person name="Runnheim R."/>
            <person name="Forrest D."/>
            <person name="Amos-Landgraf J."/>
            <person name="Schwartz D.C."/>
            <person name="Cheng Z."/>
            <person name="Lindblad-Toh K."/>
            <person name="Eichler E.E."/>
            <person name="Ponting C.P."/>
        </authorList>
    </citation>
    <scope>NUCLEOTIDE SEQUENCE [LARGE SCALE GENOMIC DNA]</scope>
    <source>
        <strain>C57BL/6J</strain>
    </source>
</reference>
<dbReference type="EMBL" id="AK012141">
    <property type="protein sequence ID" value="BAB28057.1"/>
    <property type="molecule type" value="mRNA"/>
</dbReference>
<dbReference type="EMBL" id="GL456167">
    <property type="status" value="NOT_ANNOTATED_CDS"/>
    <property type="molecule type" value="Genomic_DNA"/>
</dbReference>
<dbReference type="CCDS" id="CCDS88514.1"/>
<dbReference type="RefSeq" id="NP_001352267.1">
    <property type="nucleotide sequence ID" value="NM_001365338.2"/>
</dbReference>
<dbReference type="SMR" id="Q9CZV2"/>
<dbReference type="ComplexPortal" id="CPX-3483">
    <property type="entry name" value="Shieldin complex"/>
</dbReference>
<dbReference type="FunCoup" id="Q9CZV2">
    <property type="interactions" value="47"/>
</dbReference>
<dbReference type="STRING" id="10090.ENSMUSP00000159139"/>
<dbReference type="Antibodypedia" id="76730">
    <property type="antibodies" value="2 antibodies from 1 providers"/>
</dbReference>
<dbReference type="Ensembl" id="ENSMUST00000133280.2">
    <property type="protein sequence ID" value="ENSMUSP00000159139.2"/>
    <property type="gene ID" value="ENSMUSG00000118537.2"/>
</dbReference>
<dbReference type="GeneID" id="113002583"/>
<dbReference type="UCSC" id="uc007rsw.1">
    <property type="organism name" value="mouse"/>
</dbReference>
<dbReference type="AGR" id="MGI:6194609"/>
<dbReference type="MGI" id="MGI:6194609">
    <property type="gene designation" value="Shld3"/>
</dbReference>
<dbReference type="VEuPathDB" id="HostDB:ENSMUSG00000118537"/>
<dbReference type="GeneTree" id="ENSGT00530000065159"/>
<dbReference type="InParanoid" id="Q9CZV2"/>
<dbReference type="OMA" id="DVVLHYQ"/>
<dbReference type="OrthoDB" id="5963356at2759"/>
<dbReference type="PRO" id="PR:Q9CZV2"/>
<dbReference type="Proteomes" id="UP000000589">
    <property type="component" value="Chromosome 13"/>
</dbReference>
<dbReference type="RNAct" id="Q9CZV2">
    <property type="molecule type" value="protein"/>
</dbReference>
<dbReference type="Bgee" id="ENSMUSG00000118537">
    <property type="expression patterns" value="Expressed in cleaving embryo and 176 other cell types or tissues"/>
</dbReference>
<dbReference type="GO" id="GO:0000785">
    <property type="term" value="C:chromatin"/>
    <property type="evidence" value="ECO:0000303"/>
    <property type="project" value="ComplexPortal"/>
</dbReference>
<dbReference type="GO" id="GO:0005730">
    <property type="term" value="C:nucleolus"/>
    <property type="evidence" value="ECO:0007669"/>
    <property type="project" value="Ensembl"/>
</dbReference>
<dbReference type="GO" id="GO:0005654">
    <property type="term" value="C:nucleoplasm"/>
    <property type="evidence" value="ECO:0007669"/>
    <property type="project" value="Ensembl"/>
</dbReference>
<dbReference type="GO" id="GO:0035861">
    <property type="term" value="C:site of double-strand break"/>
    <property type="evidence" value="ECO:0000303"/>
    <property type="project" value="ComplexPortal"/>
</dbReference>
<dbReference type="GO" id="GO:0006281">
    <property type="term" value="P:DNA repair"/>
    <property type="evidence" value="ECO:0007669"/>
    <property type="project" value="UniProtKB-KW"/>
</dbReference>
<dbReference type="GO" id="GO:2000042">
    <property type="term" value="P:negative regulation of double-strand break repair via homologous recombination"/>
    <property type="evidence" value="ECO:0007669"/>
    <property type="project" value="Ensembl"/>
</dbReference>
<dbReference type="GO" id="GO:2001034">
    <property type="term" value="P:positive regulation of double-strand break repair via nonhomologous end joining"/>
    <property type="evidence" value="ECO:0000303"/>
    <property type="project" value="ComplexPortal"/>
</dbReference>
<dbReference type="GO" id="GO:0045830">
    <property type="term" value="P:positive regulation of isotype switching"/>
    <property type="evidence" value="ECO:0007669"/>
    <property type="project" value="Ensembl"/>
</dbReference>
<dbReference type="GO" id="GO:0002208">
    <property type="term" value="P:somatic diversification of immunoglobulins involved in immune response"/>
    <property type="evidence" value="ECO:0000303"/>
    <property type="project" value="ComplexPortal"/>
</dbReference>
<dbReference type="GO" id="GO:0043247">
    <property type="term" value="P:telomere maintenance in response to DNA damage"/>
    <property type="evidence" value="ECO:0000303"/>
    <property type="project" value="ComplexPortal"/>
</dbReference>
<dbReference type="CDD" id="cd22293">
    <property type="entry name" value="RBD_SHLD3_N"/>
    <property type="match status" value="1"/>
</dbReference>
<dbReference type="InterPro" id="IPR039996">
    <property type="entry name" value="Shieldin_RINN1"/>
</dbReference>
<dbReference type="PANTHER" id="PTHR41404">
    <property type="entry name" value="SHIELDIN COMPLEX SUBUNIT 3"/>
    <property type="match status" value="1"/>
</dbReference>
<dbReference type="PANTHER" id="PTHR41404:SF1">
    <property type="entry name" value="SHIELDIN COMPLEX SUBUNIT 3"/>
    <property type="match status" value="1"/>
</dbReference>
<sequence length="255" mass="29675">MDSCRMTTEVILHYRPYENDPKQLAKIAENVIQDFPTHPLPRFIPWFPYDESKLPLKPERLPPVISEEAAESVKQYLAISEPGVKSQSYDCTVDLLEFQPSSKLQHFIQSHTVKEQTNAAHLDKNSGKEKQHKQRSWSVSLASSHCPEKIFPLSRKLQASLRTLHLHSFHRARWTLEYSVCNNQTLEDIWTKLNRLIRRDELPSCNATIQRQLGQIWVFCDIKCCEYVGNLLKERLSLIGKIDLFVHKYGVIFSM</sequence>
<keyword id="KW-0158">Chromosome</keyword>
<keyword id="KW-0227">DNA damage</keyword>
<keyword id="KW-0234">DNA repair</keyword>
<keyword id="KW-1185">Reference proteome</keyword>
<organism>
    <name type="scientific">Mus musculus</name>
    <name type="common">Mouse</name>
    <dbReference type="NCBI Taxonomy" id="10090"/>
    <lineage>
        <taxon>Eukaryota</taxon>
        <taxon>Metazoa</taxon>
        <taxon>Chordata</taxon>
        <taxon>Craniata</taxon>
        <taxon>Vertebrata</taxon>
        <taxon>Euteleostomi</taxon>
        <taxon>Mammalia</taxon>
        <taxon>Eutheria</taxon>
        <taxon>Euarchontoglires</taxon>
        <taxon>Glires</taxon>
        <taxon>Rodentia</taxon>
        <taxon>Myomorpha</taxon>
        <taxon>Muroidea</taxon>
        <taxon>Muridae</taxon>
        <taxon>Murinae</taxon>
        <taxon>Mus</taxon>
        <taxon>Mus</taxon>
    </lineage>
</organism>
<gene>
    <name evidence="1" type="primary">Shld3</name>
    <name evidence="1" type="synonym">Rinn1</name>
</gene>
<name>SHLD3_MOUSE</name>
<evidence type="ECO:0000250" key="1">
    <source>
        <dbReference type="UniProtKB" id="Q6ZNX1"/>
    </source>
</evidence>
<evidence type="ECO:0000256" key="2">
    <source>
        <dbReference type="SAM" id="MobiDB-lite"/>
    </source>
</evidence>
<evidence type="ECO:0000305" key="3"/>
<proteinExistence type="evidence at transcript level"/>
<comment type="function">
    <text evidence="1">Component of the shieldin complex, which plays an important role in repair of DNA double-stranded breaks (DSBs). During G1 and S phase of the cell cycle, the complex functions downstream of TP53BP1 to promote non-homologous end joining (NHEJ) and suppress DNA end resection. Mediates various NHEJ-dependent processes including immunoglobulin class-switch recombination, and fusion of unprotected telomeres.</text>
</comment>
<comment type="subunit">
    <text evidence="1">Component of the shieldin complex, consisting of SHLD1, SHLD2, SHLD3 and MAD2L2/REV7. Within the complex, SHLD2 forms a scaffold which interacts with a SHLD3-MAD2L2 subcomplex via its N-terminus, and with SHLD1 via its C-terminus. Interacts with ASTE1.</text>
</comment>
<comment type="subcellular location">
    <subcellularLocation>
        <location evidence="1">Chromosome</location>
    </subcellularLocation>
    <text evidence="1">Recruited to sites of chromosomal double-stranded breaks during G1 and S phase of the cell cycle.</text>
</comment>
<protein>
    <recommendedName>
        <fullName evidence="1">Shieldin complex subunit 3</fullName>
    </recommendedName>
    <alternativeName>
        <fullName evidence="1">REV7-interacting novel NHEJ regulator 1</fullName>
    </alternativeName>
</protein>